<feature type="chain" id="PRO_0000409165" description="Monopolar spindle protein 2">
    <location>
        <begin position="1"/>
        <end position="387"/>
    </location>
</feature>
<feature type="transmembrane region" description="Helical" evidence="2">
    <location>
        <begin position="311"/>
        <end position="327"/>
    </location>
</feature>
<feature type="region of interest" description="Disordered" evidence="3">
    <location>
        <begin position="216"/>
        <end position="235"/>
    </location>
</feature>
<feature type="coiled-coil region" evidence="2">
    <location>
        <begin position="157"/>
        <end position="269"/>
    </location>
</feature>
<feature type="compositionally biased region" description="Polar residues" evidence="3">
    <location>
        <begin position="220"/>
        <end position="230"/>
    </location>
</feature>
<name>MPS2_YEASL</name>
<evidence type="ECO:0000250" key="1"/>
<evidence type="ECO:0000255" key="2"/>
<evidence type="ECO:0000256" key="3">
    <source>
        <dbReference type="SAM" id="MobiDB-lite"/>
    </source>
</evidence>
<evidence type="ECO:0000305" key="4"/>
<gene>
    <name type="primary">MPS2</name>
    <name type="synonym">MMC1</name>
    <name type="ORF">QA23_1714</name>
</gene>
<dbReference type="EMBL" id="ADVV01000035">
    <property type="protein sequence ID" value="EGA82905.1"/>
    <property type="molecule type" value="Genomic_DNA"/>
</dbReference>
<dbReference type="SMR" id="E7KNG0"/>
<dbReference type="HOGENOM" id="CLU_069890_0_0_1"/>
<dbReference type="GO" id="GO:0005737">
    <property type="term" value="C:cytoplasm"/>
    <property type="evidence" value="ECO:0007669"/>
    <property type="project" value="UniProtKB-KW"/>
</dbReference>
<dbReference type="GO" id="GO:0031965">
    <property type="term" value="C:nuclear membrane"/>
    <property type="evidence" value="ECO:0007669"/>
    <property type="project" value="UniProtKB-SubCell"/>
</dbReference>
<dbReference type="GO" id="GO:0005816">
    <property type="term" value="C:spindle pole body"/>
    <property type="evidence" value="ECO:0007669"/>
    <property type="project" value="UniProtKB-SubCell"/>
</dbReference>
<dbReference type="GO" id="GO:0071988">
    <property type="term" value="P:protein localization to spindle pole body"/>
    <property type="evidence" value="ECO:0007669"/>
    <property type="project" value="InterPro"/>
</dbReference>
<dbReference type="GO" id="GO:0030474">
    <property type="term" value="P:spindle pole body duplication"/>
    <property type="evidence" value="ECO:0007669"/>
    <property type="project" value="InterPro"/>
</dbReference>
<dbReference type="InterPro" id="IPR031433">
    <property type="entry name" value="Mps2"/>
</dbReference>
<dbReference type="Pfam" id="PF17060">
    <property type="entry name" value="MPS2"/>
    <property type="match status" value="1"/>
</dbReference>
<reference key="1">
    <citation type="journal article" date="2011" name="PLoS Genet.">
        <title>Whole-genome comparison reveals novel genetic elements that characterize the genome of industrial strains of Saccharomyces cerevisiae.</title>
        <authorList>
            <person name="Borneman A.R."/>
            <person name="Desany B.A."/>
            <person name="Riches D."/>
            <person name="Affourtit J.P."/>
            <person name="Forgan A.H."/>
            <person name="Pretorius I.S."/>
            <person name="Egholm M."/>
            <person name="Chambers P.J."/>
        </authorList>
    </citation>
    <scope>NUCLEOTIDE SEQUENCE [LARGE SCALE GENOMIC DNA]</scope>
    <source>
        <strain>Lalvin QA23</strain>
    </source>
</reference>
<keyword id="KW-0175">Coiled coil</keyword>
<keyword id="KW-0963">Cytoplasm</keyword>
<keyword id="KW-0206">Cytoskeleton</keyword>
<keyword id="KW-0472">Membrane</keyword>
<keyword id="KW-0539">Nucleus</keyword>
<keyword id="KW-0812">Transmembrane</keyword>
<keyword id="KW-1133">Transmembrane helix</keyword>
<sequence length="387" mass="44558">MSNGAFDAIFEYAWGQIDKPISGDFIYGKDLPKLIEIIENIFQKAQKSGSYELRLPLFSEINKDLFRTFSNTKTFFKIHKEEFDDIFFNLVNHPLREILENAFIGVDSIPSDFIVSMNLNSPSKFLVENKSKNTEGAGISTPRKKLTESPIKLLSRNNIGKALEVQVEELKRELTAKQSLLQENERQVSELKIRLETYQEKYASIQQRFSDLQKARQVEDNQNSSRTSDPGSPLVTGIDQKAILEEFRRRLQRQTDTISFLKDQIRRERGLNCSNDKVSHSKRKHATTDGDGTFKNFISAVPSNIWVKATIRIIVCFALLAGVLPYIRKYVYAHDTPSQNSRLQLSWWENSGILSKIVWFFEDQTDLETEYRSNANVDDAYSRVFGI</sequence>
<proteinExistence type="inferred from homology"/>
<organism>
    <name type="scientific">Saccharomyces cerevisiae (strain Lalvin QA23)</name>
    <name type="common">Baker's yeast</name>
    <dbReference type="NCBI Taxonomy" id="764098"/>
    <lineage>
        <taxon>Eukaryota</taxon>
        <taxon>Fungi</taxon>
        <taxon>Dikarya</taxon>
        <taxon>Ascomycota</taxon>
        <taxon>Saccharomycotina</taxon>
        <taxon>Saccharomycetes</taxon>
        <taxon>Saccharomycetales</taxon>
        <taxon>Saccharomycetaceae</taxon>
        <taxon>Saccharomyces</taxon>
    </lineage>
</organism>
<protein>
    <recommendedName>
        <fullName>Monopolar spindle protein 2</fullName>
    </recommendedName>
</protein>
<accession>E7KNG0</accession>
<comment type="function">
    <text evidence="1">Component of the spindle pole body (SPB) required for insertion of the nascent SPB into the nuclear envelope and for the proper execution of spindle pole body (SPB) duplication.</text>
</comment>
<comment type="subunit">
    <text evidence="1">Interacts with BBP1, MPS3, and SPC24.</text>
</comment>
<comment type="subcellular location">
    <subcellularLocation>
        <location evidence="1">Nucleus membrane</location>
        <topology evidence="1">Single-pass membrane protein</topology>
    </subcellularLocation>
    <subcellularLocation>
        <location evidence="1">Cytoplasm</location>
        <location evidence="1">Cytoskeleton</location>
        <location evidence="1">Microtubule organizing center</location>
        <location evidence="1">Spindle pole body</location>
    </subcellularLocation>
</comment>
<comment type="similarity">
    <text evidence="4">Belongs to the MPS2 family.</text>
</comment>